<comment type="function">
    <text evidence="2 5">Pore-forming subunit of two major inward rectifying Ca(2+) channels at the plasma membrane: Ca(2+) release-activated Ca(2+) (CRAC) channels and arachidonate-regulated Ca(2+)-selective (ARC) channels (By similarity). Assembles with ORAI2 and ORAI3 to form hexameric CRAC channels that mediate Ca(2+) influx upon depletion of endoplasmic reticulum Ca(2+) store and channel activation by Ca(2+) sensor STIM1, a process known as store-operated Ca(2+) entry (SOCE). Various pore subunit combinations may account for distinct CRAC channel spatiotemporal and cell-type specific dynamics. ORAI1 mainly contributes to the generation of Ca(2+) plateaus involved in sustained Ca(2+) entry and is dispensable for cytosolic Ca(2+) oscillations, whereas ORAI2 and ORAI3 generate oscillatory patterns. CRAC channels assemble in Ca(2+) signaling microdomains where Ca(2+) influx is coupled to calmodulin and calcineurin signaling and activation of NFAT transcription factors recruited to ORAI1 via AKAP5. Activates NFATC2/NFAT1 and NFATC3/NFAT4-mediated transcriptional responses. CRAC channels are the main pathway for Ca(2+) influx in T cells and promote the immune response to pathogens by activating NFAT-dependent cytokine and chemokine transcription (By similarity). Assembles with ORAI3 to form channels that mediate store-independent Ca(2+) influx in response to inflammatory metabolites arachidonate or its derivative leukotriene C4, termed ARC and LRC channels respectively (By similarity). Plays a prominent role in Ca(2+) influx at the basolateral membrane of mammary epithelial cells independently of the Ca(2+) content of endoplasmic reticulum or Golgi stores. May mediate transepithelial transport of large quantities of Ca(2+) for milk secretion (PubMed:23840669).</text>
</comment>
<comment type="catalytic activity">
    <reaction evidence="2">
        <text>Ca(2+)(in) = Ca(2+)(out)</text>
        <dbReference type="Rhea" id="RHEA:29671"/>
        <dbReference type="ChEBI" id="CHEBI:29108"/>
    </reaction>
    <physiologicalReaction direction="right-to-left" evidence="2">
        <dbReference type="Rhea" id="RHEA:29673"/>
    </physiologicalReaction>
</comment>
<comment type="activity regulation">
    <text evidence="2">Oxidation at Cys-197 leads to inactivation of channel activity.</text>
</comment>
<comment type="subunit">
    <text evidence="2 5">Oligomerizes in homomeric and heteromeric ORAI complexes. Native CRAC channels most likely consist of hexameric ORAI heteromers, implying that diverse ORAI1, ORAI2 and ORAI3 subunit combinations with distinct biophysical properties can operate in a cell-type specific way. ARC channels are heteropentamers consisting of three ORAI1 and two ORAI3 subunits. Interacts with STIM1 and STIM2; this regulates channel activity. Interacts with CALM; this may displace STIM1 and STIM2 and might thereby modulate channel activity. Interacts (via N-terminus) with AKAP5 upon store depletion. Interacts with CRACR2A/EFCAB4B; the interaction is direct and takes place in absence of Ca(2+). Forms a complex with CRACR2A/EFCAB4B and STIM1 at low concentration of Ca(2+), the complex dissociates at elevated Ca(2+) concentrations. Interacts with ASPH (isoform 8). Interacts with SLC35G1. Interacts with UBQLN1. Interacts with ADCY8; interaction is calcium store depletion independent; interaction occurs in membrane raft; interaction increases markedly after store depletion; positively regulates SOCE-induced adenylate cyclase activity; contributes to the targeting of ADCY8 to discrete regions of the plasma membrane that are shielded from other calcium events. Interacts with EFHB; the interaction takes place upon Ca(2+)-store depletion. Interacts (via N- and C-termini) with ATP2C2 (via N-terminus); this interaction regulates Ca(2+) influx at the plasma membrane (PubMed:23840669). Interacts with TSPAN18; this interaction regulates ORAI1 exit from the endoplasmic (ER), and/or Golgi, and trafficking to the cell surface (By similarity).</text>
</comment>
<comment type="subcellular location">
    <subcellularLocation>
        <location evidence="2">Cell membrane</location>
        <topology evidence="2">Multi-pass membrane protein</topology>
    </subcellularLocation>
    <subcellularLocation>
        <location evidence="5">Basolateral cell membrane</location>
        <topology evidence="2">Multi-pass membrane protein</topology>
    </subcellularLocation>
    <text evidence="2">Colocalizes with STIM1 in membrane punctate structures at ER-PM junctions.</text>
</comment>
<comment type="tissue specificity">
    <text evidence="5">Expressed in lactating mammary epithelium (at protein level).</text>
</comment>
<comment type="domain">
    <text evidence="2">The Pro-rich region of ORAI1 (residues 3-49) functionally interacts with the polybasic Lys-rich region of STIM1 (residues 672-685) and regulates CRAC channel gating at negative membrane potentials.</text>
</comment>
<comment type="domain">
    <text evidence="2">AKAP5 association region (AKAR) mediates coupling of ORAI1 to AKAP5-dependent NFATC2/NFAT1 transcriptional responses.</text>
</comment>
<comment type="PTM">
    <text evidence="2">N-glycosylated. N-glycosylation inhibits channel activity in T cells.</text>
</comment>
<comment type="PTM">
    <text evidence="2">Ubiquitinated.</text>
</comment>
<comment type="PTM">
    <text evidence="2">Cys-195 is oxidated, leading to inactivation of channel activity.</text>
</comment>
<comment type="similarity">
    <text evidence="6">Belongs to the Orai family.</text>
</comment>
<comment type="caution">
    <text evidence="2">According to a report, ORAI1 has been shown to colocalize with UBQLN1 in the autophagosome as a target for autophagic degradation; ORAI1 is however not an autophagosomal protein.</text>
</comment>
<comment type="sequence caution" evidence="6">
    <conflict type="erroneous initiation">
        <sequence resource="EMBL-CDS" id="AAH23149"/>
    </conflict>
    <text>Truncated N-terminus.</text>
</comment>
<evidence type="ECO:0000250" key="1"/>
<evidence type="ECO:0000250" key="2">
    <source>
        <dbReference type="UniProtKB" id="Q96D31"/>
    </source>
</evidence>
<evidence type="ECO:0000255" key="3"/>
<evidence type="ECO:0000256" key="4">
    <source>
        <dbReference type="SAM" id="MobiDB-lite"/>
    </source>
</evidence>
<evidence type="ECO:0000269" key="5">
    <source>
    </source>
</evidence>
<evidence type="ECO:0000305" key="6"/>
<protein>
    <recommendedName>
        <fullName>Calcium release-activated calcium channel protein 1</fullName>
    </recommendedName>
    <alternativeName>
        <fullName>Protein orai-1</fullName>
    </alternativeName>
    <alternativeName>
        <fullName>Transmembrane protein 142A</fullName>
    </alternativeName>
</protein>
<proteinExistence type="evidence at protein level"/>
<name>ORAI1_MOUSE</name>
<dbReference type="EMBL" id="AK052573">
    <property type="protein sequence ID" value="BAC35045.1"/>
    <property type="molecule type" value="mRNA"/>
</dbReference>
<dbReference type="EMBL" id="AK085755">
    <property type="protein sequence ID" value="BAC39533.1"/>
    <property type="molecule type" value="mRNA"/>
</dbReference>
<dbReference type="EMBL" id="BC023149">
    <property type="protein sequence ID" value="AAH23149.1"/>
    <property type="status" value="ALT_INIT"/>
    <property type="molecule type" value="mRNA"/>
</dbReference>
<dbReference type="CCDS" id="CCDS39261.1"/>
<dbReference type="RefSeq" id="NP_780632.1">
    <property type="nucleotide sequence ID" value="NM_175423.3"/>
</dbReference>
<dbReference type="BMRB" id="Q8BWG9"/>
<dbReference type="SMR" id="Q8BWG9"/>
<dbReference type="BioGRID" id="224640">
    <property type="interactions" value="5"/>
</dbReference>
<dbReference type="FunCoup" id="Q8BWG9">
    <property type="interactions" value="552"/>
</dbReference>
<dbReference type="STRING" id="10090.ENSMUSP00000113097"/>
<dbReference type="ChEMBL" id="CHEMBL4295887"/>
<dbReference type="GlyCosmos" id="Q8BWG9">
    <property type="glycosylation" value="1 site, No reported glycans"/>
</dbReference>
<dbReference type="GlyGen" id="Q8BWG9">
    <property type="glycosylation" value="1 site"/>
</dbReference>
<dbReference type="iPTMnet" id="Q8BWG9"/>
<dbReference type="PhosphoSitePlus" id="Q8BWG9"/>
<dbReference type="SwissPalm" id="Q8BWG9"/>
<dbReference type="PaxDb" id="10090-ENSMUSP00000113097"/>
<dbReference type="ProteomicsDB" id="285263"/>
<dbReference type="Pumba" id="Q8BWG9"/>
<dbReference type="Antibodypedia" id="73527">
    <property type="antibodies" value="517 antibodies from 37 providers"/>
</dbReference>
<dbReference type="DNASU" id="109305"/>
<dbReference type="Ensembl" id="ENSMUST00000121652.8">
    <property type="protein sequence ID" value="ENSMUSP00000113097.2"/>
    <property type="gene ID" value="ENSMUSG00000049686.16"/>
</dbReference>
<dbReference type="GeneID" id="109305"/>
<dbReference type="KEGG" id="mmu:109305"/>
<dbReference type="UCSC" id="uc008zmy.1">
    <property type="organism name" value="mouse"/>
</dbReference>
<dbReference type="AGR" id="MGI:1925542"/>
<dbReference type="CTD" id="84876"/>
<dbReference type="MGI" id="MGI:1925542">
    <property type="gene designation" value="Orai1"/>
</dbReference>
<dbReference type="VEuPathDB" id="HostDB:ENSMUSG00000049686"/>
<dbReference type="eggNOG" id="KOG4298">
    <property type="taxonomic scope" value="Eukaryota"/>
</dbReference>
<dbReference type="GeneTree" id="ENSGT00390000015354"/>
<dbReference type="HOGENOM" id="CLU_062509_1_1_1"/>
<dbReference type="InParanoid" id="Q8BWG9"/>
<dbReference type="OMA" id="FQVAMVE"/>
<dbReference type="OrthoDB" id="61124at2759"/>
<dbReference type="PhylomeDB" id="Q8BWG9"/>
<dbReference type="TreeFam" id="TF313576"/>
<dbReference type="BioGRID-ORCS" id="109305">
    <property type="hits" value="1 hit in 81 CRISPR screens"/>
</dbReference>
<dbReference type="ChiTaRS" id="Orai1">
    <property type="organism name" value="mouse"/>
</dbReference>
<dbReference type="PRO" id="PR:Q8BWG9"/>
<dbReference type="Proteomes" id="UP000000589">
    <property type="component" value="Chromosome 5"/>
</dbReference>
<dbReference type="RNAct" id="Q8BWG9">
    <property type="molecule type" value="protein"/>
</dbReference>
<dbReference type="Bgee" id="ENSMUSG00000049686">
    <property type="expression patterns" value="Expressed in granulocyte and 204 other cell types or tissues"/>
</dbReference>
<dbReference type="ExpressionAtlas" id="Q8BWG9">
    <property type="expression patterns" value="baseline and differential"/>
</dbReference>
<dbReference type="GO" id="GO:0016323">
    <property type="term" value="C:basolateral plasma membrane"/>
    <property type="evidence" value="ECO:0000314"/>
    <property type="project" value="MGI"/>
</dbReference>
<dbReference type="GO" id="GO:0071944">
    <property type="term" value="C:cell periphery"/>
    <property type="evidence" value="ECO:0000266"/>
    <property type="project" value="MGI"/>
</dbReference>
<dbReference type="GO" id="GO:0016020">
    <property type="term" value="C:membrane"/>
    <property type="evidence" value="ECO:0000314"/>
    <property type="project" value="MGI"/>
</dbReference>
<dbReference type="GO" id="GO:0045121">
    <property type="term" value="C:membrane raft"/>
    <property type="evidence" value="ECO:0000250"/>
    <property type="project" value="UniProtKB"/>
</dbReference>
<dbReference type="GO" id="GO:0005886">
    <property type="term" value="C:plasma membrane"/>
    <property type="evidence" value="ECO:0000314"/>
    <property type="project" value="MGI"/>
</dbReference>
<dbReference type="GO" id="GO:0044853">
    <property type="term" value="C:plasma membrane raft"/>
    <property type="evidence" value="ECO:0000250"/>
    <property type="project" value="UniProtKB"/>
</dbReference>
<dbReference type="GO" id="GO:0045202">
    <property type="term" value="C:synapse"/>
    <property type="evidence" value="ECO:0007669"/>
    <property type="project" value="GOC"/>
</dbReference>
<dbReference type="GO" id="GO:0005516">
    <property type="term" value="F:calmodulin binding"/>
    <property type="evidence" value="ECO:0007669"/>
    <property type="project" value="UniProtKB-KW"/>
</dbReference>
<dbReference type="GO" id="GO:0042802">
    <property type="term" value="F:identical protein binding"/>
    <property type="evidence" value="ECO:0007669"/>
    <property type="project" value="Ensembl"/>
</dbReference>
<dbReference type="GO" id="GO:0015279">
    <property type="term" value="F:store-operated calcium channel activity"/>
    <property type="evidence" value="ECO:0000315"/>
    <property type="project" value="MGI"/>
</dbReference>
<dbReference type="GO" id="GO:0002250">
    <property type="term" value="P:adaptive immune response"/>
    <property type="evidence" value="ECO:0007669"/>
    <property type="project" value="UniProtKB-KW"/>
</dbReference>
<dbReference type="GO" id="GO:0070509">
    <property type="term" value="P:calcium ion import"/>
    <property type="evidence" value="ECO:0000314"/>
    <property type="project" value="MGI"/>
</dbReference>
<dbReference type="GO" id="GO:0017156">
    <property type="term" value="P:calcium-ion regulated exocytosis"/>
    <property type="evidence" value="ECO:0000266"/>
    <property type="project" value="MGI"/>
</dbReference>
<dbReference type="GO" id="GO:0051649">
    <property type="term" value="P:establishment of localization in cell"/>
    <property type="evidence" value="ECO:0000266"/>
    <property type="project" value="MGI"/>
</dbReference>
<dbReference type="GO" id="GO:1990806">
    <property type="term" value="P:ligand-gated ion channel signaling pathway"/>
    <property type="evidence" value="ECO:0000315"/>
    <property type="project" value="MGI"/>
</dbReference>
<dbReference type="GO" id="GO:0061180">
    <property type="term" value="P:mammary gland epithelium development"/>
    <property type="evidence" value="ECO:0000315"/>
    <property type="project" value="MGI"/>
</dbReference>
<dbReference type="GO" id="GO:0007207">
    <property type="term" value="P:phospholipase C-activating G protein-coupled acetylcholine receptor signaling pathway"/>
    <property type="evidence" value="ECO:0000266"/>
    <property type="project" value="MGI"/>
</dbReference>
<dbReference type="GO" id="GO:0007200">
    <property type="term" value="P:phospholipase C-activating G protein-coupled receptor signaling pathway"/>
    <property type="evidence" value="ECO:0000315"/>
    <property type="project" value="MGI"/>
</dbReference>
<dbReference type="GO" id="GO:0045762">
    <property type="term" value="P:positive regulation of adenylate cyclase activity"/>
    <property type="evidence" value="ECO:0000250"/>
    <property type="project" value="UniProtKB"/>
</dbReference>
<dbReference type="GO" id="GO:0051928">
    <property type="term" value="P:positive regulation of calcium ion transport"/>
    <property type="evidence" value="ECO:0000250"/>
    <property type="project" value="UniProtKB"/>
</dbReference>
<dbReference type="GO" id="GO:0032024">
    <property type="term" value="P:positive regulation of insulin secretion"/>
    <property type="evidence" value="ECO:0000315"/>
    <property type="project" value="MGI"/>
</dbReference>
<dbReference type="GO" id="GO:0002115">
    <property type="term" value="P:store-operated calcium entry"/>
    <property type="evidence" value="ECO:0000316"/>
    <property type="project" value="MGI"/>
</dbReference>
<dbReference type="FunFam" id="1.20.140.140:FF:000001">
    <property type="entry name" value="Calcium release-activated calcium modulator 1"/>
    <property type="match status" value="1"/>
</dbReference>
<dbReference type="Gene3D" id="1.20.140.140">
    <property type="entry name" value="Calcium release-activated calcium channel protein Orai"/>
    <property type="match status" value="1"/>
</dbReference>
<dbReference type="InterPro" id="IPR012446">
    <property type="entry name" value="CRAC_channel"/>
</dbReference>
<dbReference type="InterPro" id="IPR038350">
    <property type="entry name" value="Orai_sf"/>
</dbReference>
<dbReference type="PANTHER" id="PTHR31501">
    <property type="entry name" value="CALCIUM RELEASE-ACTIVATED CALCIUM CHANNEL PROTEIN 1"/>
    <property type="match status" value="1"/>
</dbReference>
<dbReference type="PANTHER" id="PTHR31501:SF3">
    <property type="entry name" value="CALCIUM RELEASE-ACTIVATED CALCIUM CHANNEL PROTEIN 1"/>
    <property type="match status" value="1"/>
</dbReference>
<dbReference type="Pfam" id="PF07856">
    <property type="entry name" value="Orai-1"/>
    <property type="match status" value="1"/>
</dbReference>
<organism>
    <name type="scientific">Mus musculus</name>
    <name type="common">Mouse</name>
    <dbReference type="NCBI Taxonomy" id="10090"/>
    <lineage>
        <taxon>Eukaryota</taxon>
        <taxon>Metazoa</taxon>
        <taxon>Chordata</taxon>
        <taxon>Craniata</taxon>
        <taxon>Vertebrata</taxon>
        <taxon>Euteleostomi</taxon>
        <taxon>Mammalia</taxon>
        <taxon>Eutheria</taxon>
        <taxon>Euarchontoglires</taxon>
        <taxon>Glires</taxon>
        <taxon>Rodentia</taxon>
        <taxon>Myomorpha</taxon>
        <taxon>Muroidea</taxon>
        <taxon>Muridae</taxon>
        <taxon>Murinae</taxon>
        <taxon>Mus</taxon>
        <taxon>Mus</taxon>
    </lineage>
</organism>
<sequence length="304" mass="33062">MHPEPAPPPSHSNPELPVSGGSSTSGSRRSRRRSGDGEPSGAPPLPPPPPAVSYPDWIGQSYSEVMSLNEHSMQALSWRKLYLSRAKLKASSRTSALLSGFAMVAMVEVQLDTDHDYPPGLLIVFSACTTVLVAVHLFALMISTCILPNIEAVSNVHNLNSVKESPHERMHRHIELAWAFSTVIGTLLFLAEVVLLCWVKFLPLKRQAGQPSPTKPPAESVIVANHSDSSGITPGEAAAIASTAIMVPCGLVFIVFAVHFYRSLVSHKTDRQFQELNELAEFARLQDQLDHRGDHSLTPGTHYA</sequence>
<accession>Q8BWG9</accession>
<accession>Q8BUD4</accession>
<accession>Q8R586</accession>
<reference key="1">
    <citation type="journal article" date="2005" name="Science">
        <title>The transcriptional landscape of the mammalian genome.</title>
        <authorList>
            <person name="Carninci P."/>
            <person name="Kasukawa T."/>
            <person name="Katayama S."/>
            <person name="Gough J."/>
            <person name="Frith M.C."/>
            <person name="Maeda N."/>
            <person name="Oyama R."/>
            <person name="Ravasi T."/>
            <person name="Lenhard B."/>
            <person name="Wells C."/>
            <person name="Kodzius R."/>
            <person name="Shimokawa K."/>
            <person name="Bajic V.B."/>
            <person name="Brenner S.E."/>
            <person name="Batalov S."/>
            <person name="Forrest A.R."/>
            <person name="Zavolan M."/>
            <person name="Davis M.J."/>
            <person name="Wilming L.G."/>
            <person name="Aidinis V."/>
            <person name="Allen J.E."/>
            <person name="Ambesi-Impiombato A."/>
            <person name="Apweiler R."/>
            <person name="Aturaliya R.N."/>
            <person name="Bailey T.L."/>
            <person name="Bansal M."/>
            <person name="Baxter L."/>
            <person name="Beisel K.W."/>
            <person name="Bersano T."/>
            <person name="Bono H."/>
            <person name="Chalk A.M."/>
            <person name="Chiu K.P."/>
            <person name="Choudhary V."/>
            <person name="Christoffels A."/>
            <person name="Clutterbuck D.R."/>
            <person name="Crowe M.L."/>
            <person name="Dalla E."/>
            <person name="Dalrymple B.P."/>
            <person name="de Bono B."/>
            <person name="Della Gatta G."/>
            <person name="di Bernardo D."/>
            <person name="Down T."/>
            <person name="Engstrom P."/>
            <person name="Fagiolini M."/>
            <person name="Faulkner G."/>
            <person name="Fletcher C.F."/>
            <person name="Fukushima T."/>
            <person name="Furuno M."/>
            <person name="Futaki S."/>
            <person name="Gariboldi M."/>
            <person name="Georgii-Hemming P."/>
            <person name="Gingeras T.R."/>
            <person name="Gojobori T."/>
            <person name="Green R.E."/>
            <person name="Gustincich S."/>
            <person name="Harbers M."/>
            <person name="Hayashi Y."/>
            <person name="Hensch T.K."/>
            <person name="Hirokawa N."/>
            <person name="Hill D."/>
            <person name="Huminiecki L."/>
            <person name="Iacono M."/>
            <person name="Ikeo K."/>
            <person name="Iwama A."/>
            <person name="Ishikawa T."/>
            <person name="Jakt M."/>
            <person name="Kanapin A."/>
            <person name="Katoh M."/>
            <person name="Kawasawa Y."/>
            <person name="Kelso J."/>
            <person name="Kitamura H."/>
            <person name="Kitano H."/>
            <person name="Kollias G."/>
            <person name="Krishnan S.P."/>
            <person name="Kruger A."/>
            <person name="Kummerfeld S.K."/>
            <person name="Kurochkin I.V."/>
            <person name="Lareau L.F."/>
            <person name="Lazarevic D."/>
            <person name="Lipovich L."/>
            <person name="Liu J."/>
            <person name="Liuni S."/>
            <person name="McWilliam S."/>
            <person name="Madan Babu M."/>
            <person name="Madera M."/>
            <person name="Marchionni L."/>
            <person name="Matsuda H."/>
            <person name="Matsuzawa S."/>
            <person name="Miki H."/>
            <person name="Mignone F."/>
            <person name="Miyake S."/>
            <person name="Morris K."/>
            <person name="Mottagui-Tabar S."/>
            <person name="Mulder N."/>
            <person name="Nakano N."/>
            <person name="Nakauchi H."/>
            <person name="Ng P."/>
            <person name="Nilsson R."/>
            <person name="Nishiguchi S."/>
            <person name="Nishikawa S."/>
            <person name="Nori F."/>
            <person name="Ohara O."/>
            <person name="Okazaki Y."/>
            <person name="Orlando V."/>
            <person name="Pang K.C."/>
            <person name="Pavan W.J."/>
            <person name="Pavesi G."/>
            <person name="Pesole G."/>
            <person name="Petrovsky N."/>
            <person name="Piazza S."/>
            <person name="Reed J."/>
            <person name="Reid J.F."/>
            <person name="Ring B.Z."/>
            <person name="Ringwald M."/>
            <person name="Rost B."/>
            <person name="Ruan Y."/>
            <person name="Salzberg S.L."/>
            <person name="Sandelin A."/>
            <person name="Schneider C."/>
            <person name="Schoenbach C."/>
            <person name="Sekiguchi K."/>
            <person name="Semple C.A."/>
            <person name="Seno S."/>
            <person name="Sessa L."/>
            <person name="Sheng Y."/>
            <person name="Shibata Y."/>
            <person name="Shimada H."/>
            <person name="Shimada K."/>
            <person name="Silva D."/>
            <person name="Sinclair B."/>
            <person name="Sperling S."/>
            <person name="Stupka E."/>
            <person name="Sugiura K."/>
            <person name="Sultana R."/>
            <person name="Takenaka Y."/>
            <person name="Taki K."/>
            <person name="Tammoja K."/>
            <person name="Tan S.L."/>
            <person name="Tang S."/>
            <person name="Taylor M.S."/>
            <person name="Tegner J."/>
            <person name="Teichmann S.A."/>
            <person name="Ueda H.R."/>
            <person name="van Nimwegen E."/>
            <person name="Verardo R."/>
            <person name="Wei C.L."/>
            <person name="Yagi K."/>
            <person name="Yamanishi H."/>
            <person name="Zabarovsky E."/>
            <person name="Zhu S."/>
            <person name="Zimmer A."/>
            <person name="Hide W."/>
            <person name="Bult C."/>
            <person name="Grimmond S.M."/>
            <person name="Teasdale R.D."/>
            <person name="Liu E.T."/>
            <person name="Brusic V."/>
            <person name="Quackenbush J."/>
            <person name="Wahlestedt C."/>
            <person name="Mattick J.S."/>
            <person name="Hume D.A."/>
            <person name="Kai C."/>
            <person name="Sasaki D."/>
            <person name="Tomaru Y."/>
            <person name="Fukuda S."/>
            <person name="Kanamori-Katayama M."/>
            <person name="Suzuki M."/>
            <person name="Aoki J."/>
            <person name="Arakawa T."/>
            <person name="Iida J."/>
            <person name="Imamura K."/>
            <person name="Itoh M."/>
            <person name="Kato T."/>
            <person name="Kawaji H."/>
            <person name="Kawagashira N."/>
            <person name="Kawashima T."/>
            <person name="Kojima M."/>
            <person name="Kondo S."/>
            <person name="Konno H."/>
            <person name="Nakano K."/>
            <person name="Ninomiya N."/>
            <person name="Nishio T."/>
            <person name="Okada M."/>
            <person name="Plessy C."/>
            <person name="Shibata K."/>
            <person name="Shiraki T."/>
            <person name="Suzuki S."/>
            <person name="Tagami M."/>
            <person name="Waki K."/>
            <person name="Watahiki A."/>
            <person name="Okamura-Oho Y."/>
            <person name="Suzuki H."/>
            <person name="Kawai J."/>
            <person name="Hayashizaki Y."/>
        </authorList>
    </citation>
    <scope>NUCLEOTIDE SEQUENCE [LARGE SCALE MRNA]</scope>
    <source>
        <strain>C57BL/6J</strain>
        <tissue>Mammary gland</tissue>
        <tissue>Stomach</tissue>
    </source>
</reference>
<reference key="2">
    <citation type="journal article" date="2004" name="Genome Res.">
        <title>The status, quality, and expansion of the NIH full-length cDNA project: the Mammalian Gene Collection (MGC).</title>
        <authorList>
            <consortium name="The MGC Project Team"/>
        </authorList>
    </citation>
    <scope>NUCLEOTIDE SEQUENCE [LARGE SCALE MRNA] OF 16-304</scope>
    <source>
        <strain>Czech II</strain>
        <tissue>Mammary gland</tissue>
    </source>
</reference>
<reference key="3">
    <citation type="journal article" date="2013" name="PLoS ONE">
        <title>SPCA2 regulates Orai1 trafficking and store independent Ca2+ entry in a model of lactation.</title>
        <authorList>
            <person name="Cross B.M."/>
            <person name="Hack A."/>
            <person name="Reinhardt T.A."/>
            <person name="Rao R."/>
        </authorList>
    </citation>
    <scope>FUNCTION</scope>
    <scope>SUBCELLULAR LOCATION</scope>
    <scope>TISSUE SPECIFICITY</scope>
    <scope>INTERACTION WITH ATP2C2</scope>
</reference>
<keyword id="KW-1064">Adaptive immunity</keyword>
<keyword id="KW-0106">Calcium</keyword>
<keyword id="KW-0107">Calcium channel</keyword>
<keyword id="KW-0109">Calcium transport</keyword>
<keyword id="KW-0112">Calmodulin-binding</keyword>
<keyword id="KW-1003">Cell membrane</keyword>
<keyword id="KW-0325">Glycoprotein</keyword>
<keyword id="KW-0391">Immunity</keyword>
<keyword id="KW-0407">Ion channel</keyword>
<keyword id="KW-0406">Ion transport</keyword>
<keyword id="KW-0472">Membrane</keyword>
<keyword id="KW-0597">Phosphoprotein</keyword>
<keyword id="KW-1185">Reference proteome</keyword>
<keyword id="KW-0812">Transmembrane</keyword>
<keyword id="KW-1133">Transmembrane helix</keyword>
<keyword id="KW-0813">Transport</keyword>
<keyword id="KW-0832">Ubl conjugation</keyword>
<gene>
    <name type="primary">Orai1</name>
    <name type="synonym">Cracm1</name>
    <name type="synonym">Tmem142a</name>
</gene>
<feature type="chain" id="PRO_0000234382" description="Calcium release-activated calcium channel protein 1">
    <location>
        <begin position="1"/>
        <end position="304"/>
    </location>
</feature>
<feature type="topological domain" description="Cytoplasmic" evidence="1">
    <location>
        <begin position="1"/>
        <end position="89"/>
    </location>
</feature>
<feature type="transmembrane region" description="Helical" evidence="3">
    <location>
        <begin position="90"/>
        <end position="107"/>
    </location>
</feature>
<feature type="topological domain" description="Extracellular" evidence="3">
    <location>
        <begin position="108"/>
        <end position="121"/>
    </location>
</feature>
<feature type="transmembrane region" description="Helical" evidence="3">
    <location>
        <begin position="122"/>
        <end position="142"/>
    </location>
</feature>
<feature type="topological domain" description="Cytoplasmic" evidence="3">
    <location>
        <begin position="143"/>
        <end position="175"/>
    </location>
</feature>
<feature type="transmembrane region" description="Helical" evidence="3">
    <location>
        <begin position="176"/>
        <end position="196"/>
    </location>
</feature>
<feature type="topological domain" description="Extracellular" evidence="3">
    <location>
        <begin position="197"/>
        <end position="237"/>
    </location>
</feature>
<feature type="transmembrane region" description="Helical" evidence="3">
    <location>
        <begin position="238"/>
        <end position="258"/>
    </location>
</feature>
<feature type="topological domain" description="Cytoplasmic" evidence="1">
    <location>
        <begin position="259"/>
        <end position="304"/>
    </location>
</feature>
<feature type="region of interest" description="Disordered" evidence="4">
    <location>
        <begin position="1"/>
        <end position="50"/>
    </location>
</feature>
<feature type="region of interest" description="Required for generation of inwardly rectifying CRAC currents" evidence="2">
    <location>
        <begin position="3"/>
        <end position="49"/>
    </location>
</feature>
<feature type="region of interest" description="AKAP5 association region" evidence="2">
    <location>
        <begin position="39"/>
        <end position="61"/>
    </location>
</feature>
<feature type="region of interest" description="Interaction with STIM1" evidence="2">
    <location>
        <begin position="72"/>
        <end position="92"/>
    </location>
</feature>
<feature type="region of interest" description="Interaction with STIM1" evidence="2">
    <location>
        <begin position="275"/>
        <end position="295"/>
    </location>
</feature>
<feature type="compositionally biased region" description="Pro residues" evidence="4">
    <location>
        <begin position="1"/>
        <end position="11"/>
    </location>
</feature>
<feature type="compositionally biased region" description="Low complexity" evidence="4">
    <location>
        <begin position="12"/>
        <end position="27"/>
    </location>
</feature>
<feature type="compositionally biased region" description="Pro residues" evidence="4">
    <location>
        <begin position="41"/>
        <end position="50"/>
    </location>
</feature>
<feature type="site" description="Confers selective permeability to Ca(2+) ions" evidence="2">
    <location>
        <position position="108"/>
    </location>
</feature>
<feature type="modified residue" description="Phosphothreonine" evidence="2">
    <location>
        <position position="298"/>
    </location>
</feature>
<feature type="glycosylation site" description="N-linked (GlcNAc...) asparagine" evidence="3">
    <location>
        <position position="225"/>
    </location>
</feature>
<feature type="sequence conflict" description="In Ref. 2; AAH23149." evidence="6" ref="2">
    <original>L</original>
    <variation>F</variation>
    <location>
        <position position="16"/>
    </location>
</feature>